<reference evidence="2" key="1">
    <citation type="journal article" date="2004" name="Nature">
        <title>The DNA sequence and analysis of human chromosome 13.</title>
        <authorList>
            <person name="Dunham A."/>
            <person name="Matthews L.H."/>
            <person name="Burton J."/>
            <person name="Ashurst J.L."/>
            <person name="Howe K.L."/>
            <person name="Ashcroft K.J."/>
            <person name="Beare D.M."/>
            <person name="Burford D.C."/>
            <person name="Hunt S.E."/>
            <person name="Griffiths-Jones S."/>
            <person name="Jones M.C."/>
            <person name="Keenan S.J."/>
            <person name="Oliver K."/>
            <person name="Scott C.E."/>
            <person name="Ainscough R."/>
            <person name="Almeida J.P."/>
            <person name="Ambrose K.D."/>
            <person name="Andrews D.T."/>
            <person name="Ashwell R.I.S."/>
            <person name="Babbage A.K."/>
            <person name="Bagguley C.L."/>
            <person name="Bailey J."/>
            <person name="Bannerjee R."/>
            <person name="Barlow K.F."/>
            <person name="Bates K."/>
            <person name="Beasley H."/>
            <person name="Bird C.P."/>
            <person name="Bray-Allen S."/>
            <person name="Brown A.J."/>
            <person name="Brown J.Y."/>
            <person name="Burrill W."/>
            <person name="Carder C."/>
            <person name="Carter N.P."/>
            <person name="Chapman J.C."/>
            <person name="Clamp M.E."/>
            <person name="Clark S.Y."/>
            <person name="Clarke G."/>
            <person name="Clee C.M."/>
            <person name="Clegg S.C."/>
            <person name="Cobley V."/>
            <person name="Collins J.E."/>
            <person name="Corby N."/>
            <person name="Coville G.J."/>
            <person name="Deloukas P."/>
            <person name="Dhami P."/>
            <person name="Dunham I."/>
            <person name="Dunn M."/>
            <person name="Earthrowl M.E."/>
            <person name="Ellington A.G."/>
            <person name="Faulkner L."/>
            <person name="Frankish A.G."/>
            <person name="Frankland J."/>
            <person name="French L."/>
            <person name="Garner P."/>
            <person name="Garnett J."/>
            <person name="Gilbert J.G.R."/>
            <person name="Gilson C.J."/>
            <person name="Ghori J."/>
            <person name="Grafham D.V."/>
            <person name="Gribble S.M."/>
            <person name="Griffiths C."/>
            <person name="Hall R.E."/>
            <person name="Hammond S."/>
            <person name="Harley J.L."/>
            <person name="Hart E.A."/>
            <person name="Heath P.D."/>
            <person name="Howden P.J."/>
            <person name="Huckle E.J."/>
            <person name="Hunt P.J."/>
            <person name="Hunt A.R."/>
            <person name="Johnson C."/>
            <person name="Johnson D."/>
            <person name="Kay M."/>
            <person name="Kimberley A.M."/>
            <person name="King A."/>
            <person name="Laird G.K."/>
            <person name="Langford C.J."/>
            <person name="Lawlor S."/>
            <person name="Leongamornlert D.A."/>
            <person name="Lloyd D.M."/>
            <person name="Lloyd C."/>
            <person name="Loveland J.E."/>
            <person name="Lovell J."/>
            <person name="Martin S."/>
            <person name="Mashreghi-Mohammadi M."/>
            <person name="McLaren S.J."/>
            <person name="McMurray A."/>
            <person name="Milne S."/>
            <person name="Moore M.J.F."/>
            <person name="Nickerson T."/>
            <person name="Palmer S.A."/>
            <person name="Pearce A.V."/>
            <person name="Peck A.I."/>
            <person name="Pelan S."/>
            <person name="Phillimore B."/>
            <person name="Porter K.M."/>
            <person name="Rice C.M."/>
            <person name="Searle S."/>
            <person name="Sehra H.K."/>
            <person name="Shownkeen R."/>
            <person name="Skuce C.D."/>
            <person name="Smith M."/>
            <person name="Steward C.A."/>
            <person name="Sycamore N."/>
            <person name="Tester J."/>
            <person name="Thomas D.W."/>
            <person name="Tracey A."/>
            <person name="Tromans A."/>
            <person name="Tubby B."/>
            <person name="Wall M."/>
            <person name="Wallis J.M."/>
            <person name="West A.P."/>
            <person name="Whitehead S.L."/>
            <person name="Willey D.L."/>
            <person name="Wilming L."/>
            <person name="Wray P.W."/>
            <person name="Wright M.W."/>
            <person name="Young L."/>
            <person name="Coulson A."/>
            <person name="Durbin R.M."/>
            <person name="Hubbard T."/>
            <person name="Sulston J.E."/>
            <person name="Beck S."/>
            <person name="Bentley D.R."/>
            <person name="Rogers J."/>
            <person name="Ross M.T."/>
        </authorList>
    </citation>
    <scope>NUCLEOTIDE SEQUENCE [LARGE SCALE GENOMIC DNA]</scope>
</reference>
<comment type="interaction">
    <interactant intactId="EBI-10172814">
        <id>P86479</id>
    </interactant>
    <interactant intactId="EBI-930964">
        <id>P54253</id>
        <label>ATXN1</label>
    </interactant>
    <organismsDiffer>false</organismsDiffer>
    <experiments>3</experiments>
</comment>
<comment type="interaction">
    <interactant intactId="EBI-10172814">
        <id>P86479</id>
    </interactant>
    <interactant intactId="EBI-946029">
        <id>Q6P1W5</id>
        <label>C1orf94</label>
    </interactant>
    <organismsDiffer>false</organismsDiffer>
    <experiments>3</experiments>
</comment>
<comment type="interaction">
    <interactant intactId="EBI-10172814">
        <id>P86479</id>
    </interactant>
    <interactant intactId="EBI-7875264">
        <id>O75553</id>
        <label>DAB1</label>
    </interactant>
    <organismsDiffer>false</organismsDiffer>
    <experiments>3</experiments>
</comment>
<comment type="interaction">
    <interactant intactId="EBI-10172814">
        <id>P86479</id>
    </interactant>
    <interactant intactId="EBI-724310">
        <id>Q15038</id>
        <label>DAZAP2</label>
    </interactant>
    <organismsDiffer>false</organismsDiffer>
    <experiments>4</experiments>
</comment>
<comment type="interaction">
    <interactant intactId="EBI-10172814">
        <id>P86479</id>
    </interactant>
    <interactant intactId="EBI-7957930">
        <id>Q92567</id>
        <label>FAM168A</label>
    </interactant>
    <organismsDiffer>false</organismsDiffer>
    <experiments>3</experiments>
</comment>
<comment type="interaction">
    <interactant intactId="EBI-10172814">
        <id>P86479</id>
    </interactant>
    <interactant intactId="EBI-983719">
        <id>Q9BZS1</id>
        <label>FOXP3</label>
    </interactant>
    <organismsDiffer>false</organismsDiffer>
    <experiments>4</experiments>
</comment>
<comment type="interaction">
    <interactant intactId="EBI-10172814">
        <id>P86479</id>
    </interactant>
    <interactant intactId="EBI-2806671">
        <id>P23769</id>
        <label>GATA2</label>
    </interactant>
    <organismsDiffer>false</organismsDiffer>
    <experiments>3</experiments>
</comment>
<comment type="interaction">
    <interactant intactId="EBI-10172814">
        <id>P86479</id>
    </interactant>
    <interactant intactId="EBI-9106509">
        <id>Q9BRA0</id>
        <label>NAA38</label>
    </interactant>
    <organismsDiffer>false</organismsDiffer>
    <experiments>3</experiments>
</comment>
<comment type="interaction">
    <interactant intactId="EBI-10172814">
        <id>P86479</id>
    </interactant>
    <interactant intactId="EBI-713635">
        <id>O43639</id>
        <label>NCK2</label>
    </interactant>
    <organismsDiffer>false</organismsDiffer>
    <experiments>3</experiments>
</comment>
<comment type="interaction">
    <interactant intactId="EBI-10172814">
        <id>P86479</id>
    </interactant>
    <interactant intactId="EBI-2108053">
        <id>Q14511</id>
        <label>NEDD9</label>
    </interactant>
    <organismsDiffer>false</organismsDiffer>
    <experiments>3</experiments>
</comment>
<comment type="interaction">
    <interactant intactId="EBI-10172814">
        <id>P86479</id>
    </interactant>
    <interactant intactId="EBI-1389308">
        <id>Q7Z3K3</id>
        <label>POGZ</label>
    </interactant>
    <organismsDiffer>false</organismsDiffer>
    <experiments>3</experiments>
</comment>
<comment type="interaction">
    <interactant intactId="EBI-10172814">
        <id>P86479</id>
    </interactant>
    <interactant intactId="EBI-740322">
        <id>Q93062</id>
        <label>RBPMS</label>
    </interactant>
    <organismsDiffer>false</organismsDiffer>
    <experiments>3</experiments>
</comment>
<comment type="interaction">
    <interactant intactId="EBI-10172814">
        <id>P86479</id>
    </interactant>
    <interactant intactId="EBI-10172778">
        <id>A1L4F5</id>
        <label>ROR2</label>
    </interactant>
    <organismsDiffer>false</organismsDiffer>
    <experiments>3</experiments>
</comment>
<comment type="interaction">
    <interactant intactId="EBI-10172814">
        <id>P86479</id>
    </interactant>
    <interactant intactId="EBI-10216195">
        <id>P59797</id>
        <label>SELENOV</label>
    </interactant>
    <organismsDiffer>false</organismsDiffer>
    <experiments>3</experiments>
</comment>
<comment type="interaction">
    <interactant intactId="EBI-10172814">
        <id>P86479</id>
    </interactant>
    <interactant intactId="EBI-747107">
        <id>Q8IUQ4</id>
        <label>SIAH1</label>
    </interactant>
    <organismsDiffer>false</organismsDiffer>
    <experiments>5</experiments>
</comment>
<comment type="interaction">
    <interactant intactId="EBI-10172814">
        <id>P86479</id>
    </interactant>
    <interactant intactId="EBI-3505701">
        <id>P35711</id>
        <label>SOX5</label>
    </interactant>
    <organismsDiffer>false</organismsDiffer>
    <experiments>3</experiments>
</comment>
<comment type="interaction">
    <interactant intactId="EBI-10172814">
        <id>P86479</id>
    </interactant>
    <interactant intactId="EBI-10198587">
        <id>Q02446</id>
        <label>SP4</label>
    </interactant>
    <organismsDiffer>false</organismsDiffer>
    <experiments>5</experiments>
</comment>
<comment type="interaction">
    <interactant intactId="EBI-10172814">
        <id>P86479</id>
    </interactant>
    <interactant intactId="EBI-741515">
        <id>Q9NVV9</id>
        <label>THAP1</label>
    </interactant>
    <organismsDiffer>false</organismsDiffer>
    <experiments>3</experiments>
</comment>
<comment type="interaction">
    <interactant intactId="EBI-10172814">
        <id>P86479</id>
    </interactant>
    <interactant intactId="EBI-10249783">
        <id>Q6FIE9</id>
        <label>TOLLIP</label>
    </interactant>
    <organismsDiffer>false</organismsDiffer>
    <experiments>3</experiments>
</comment>
<comment type="interaction">
    <interactant intactId="EBI-10172814">
        <id>P86479</id>
    </interactant>
    <interactant intactId="EBI-2107455">
        <id>Q08AM6</id>
        <label>VAC14</label>
    </interactant>
    <organismsDiffer>false</organismsDiffer>
    <experiments>3</experiments>
</comment>
<comment type="interaction">
    <interactant intactId="EBI-10172814">
        <id>P86479</id>
    </interactant>
    <interactant intactId="EBI-742550">
        <id>Q96K80</id>
        <label>ZC3H10</label>
    </interactant>
    <organismsDiffer>false</organismsDiffer>
    <experiments>3</experiments>
</comment>
<comment type="interaction">
    <interactant intactId="EBI-10172814">
        <id>P86479</id>
    </interactant>
    <interactant intactId="EBI-948288">
        <id>Q96MN9</id>
        <label>ZNF488</label>
    </interactant>
    <organismsDiffer>false</organismsDiffer>
    <experiments>3</experiments>
</comment>
<comment type="similarity">
    <text evidence="2">Belongs to the PRR20 family.</text>
</comment>
<proteinExistence type="evidence at protein level"/>
<organism>
    <name type="scientific">Homo sapiens</name>
    <name type="common">Human</name>
    <dbReference type="NCBI Taxonomy" id="9606"/>
    <lineage>
        <taxon>Eukaryota</taxon>
        <taxon>Metazoa</taxon>
        <taxon>Chordata</taxon>
        <taxon>Craniata</taxon>
        <taxon>Vertebrata</taxon>
        <taxon>Euteleostomi</taxon>
        <taxon>Mammalia</taxon>
        <taxon>Eutheria</taxon>
        <taxon>Euarchontoglires</taxon>
        <taxon>Primates</taxon>
        <taxon>Haplorrhini</taxon>
        <taxon>Catarrhini</taxon>
        <taxon>Hominidae</taxon>
        <taxon>Homo</taxon>
    </lineage>
</organism>
<protein>
    <recommendedName>
        <fullName evidence="2">Proline-rich protein 20C</fullName>
    </recommendedName>
</protein>
<name>PR20C_HUMAN</name>
<feature type="chain" id="PRO_0000393892" description="Proline-rich protein 20C">
    <location>
        <begin position="1"/>
        <end position="221"/>
    </location>
</feature>
<feature type="region of interest" description="Disordered" evidence="1">
    <location>
        <begin position="1"/>
        <end position="103"/>
    </location>
</feature>
<feature type="region of interest" description="Disordered" evidence="1">
    <location>
        <begin position="137"/>
        <end position="174"/>
    </location>
</feature>
<feature type="compositionally biased region" description="Low complexity" evidence="1">
    <location>
        <begin position="42"/>
        <end position="53"/>
    </location>
</feature>
<feature type="compositionally biased region" description="Pro residues" evidence="1">
    <location>
        <begin position="63"/>
        <end position="72"/>
    </location>
</feature>
<feature type="compositionally biased region" description="Basic residues" evidence="1">
    <location>
        <begin position="75"/>
        <end position="93"/>
    </location>
</feature>
<keyword id="KW-1185">Reference proteome</keyword>
<sequence length="221" mass="23262">MEEPRPSKRLRSMAPNQASGGPPPEPGCCVADPEGSVEADGPAQPAQPAKPIAYVKPFRRQPPARPESPPPAERGRRRGGSRRPGRGRGRRAGPRGDAGQRQGAEGLMAPDVHIQLDHHGEPGHQGEPEITETAAFSLSETGPPPGTVQEGPGPDVAQPELGFQEPPAAPGPQAVDWQPVLTLYPCIGFRALGDSAVLQVIQTPQGTYVQGVPVFLTDIAY</sequence>
<evidence type="ECO:0000256" key="1">
    <source>
        <dbReference type="SAM" id="MobiDB-lite"/>
    </source>
</evidence>
<evidence type="ECO:0000305" key="2"/>
<evidence type="ECO:0000312" key="3">
    <source>
        <dbReference type="HGNC" id="HGNC:37221"/>
    </source>
</evidence>
<accession>P86479</accession>
<accession>Q8N7V5</accession>
<dbReference type="EMBL" id="AL353652">
    <property type="status" value="NOT_ANNOTATED_CDS"/>
    <property type="molecule type" value="Genomic_DNA"/>
</dbReference>
<dbReference type="CCDS" id="CCDS45054.1"/>
<dbReference type="RefSeq" id="NP_001123876.1">
    <property type="nucleotide sequence ID" value="NM_001130404.1"/>
</dbReference>
<dbReference type="RefSeq" id="NP_001123877.1">
    <property type="nucleotide sequence ID" value="NM_001130405.1"/>
</dbReference>
<dbReference type="RefSeq" id="NP_001123878.1">
    <property type="nucleotide sequence ID" value="NM_001130406.1"/>
</dbReference>
<dbReference type="RefSeq" id="NP_001123879.1">
    <property type="nucleotide sequence ID" value="NM_001130407.1"/>
</dbReference>
<dbReference type="RefSeq" id="NP_940843.1">
    <property type="nucleotide sequence ID" value="NM_198441.2"/>
</dbReference>
<dbReference type="RefSeq" id="XP_016855016.1">
    <property type="nucleotide sequence ID" value="XM_016999527.1"/>
</dbReference>
<dbReference type="BioGRID" id="125761">
    <property type="interactions" value="149"/>
</dbReference>
<dbReference type="BioGRID" id="609637">
    <property type="interactions" value="90"/>
</dbReference>
<dbReference type="BioGRID" id="609643">
    <property type="interactions" value="90"/>
</dbReference>
<dbReference type="BioGRID" id="609649">
    <property type="interactions" value="90"/>
</dbReference>
<dbReference type="BioGRID" id="609653">
    <property type="interactions" value="101"/>
</dbReference>
<dbReference type="IntAct" id="P86479">
    <property type="interactions" value="26"/>
</dbReference>
<dbReference type="iPTMnet" id="P86479"/>
<dbReference type="PhosphoSitePlus" id="P86479"/>
<dbReference type="BioMuta" id="PRR20C"/>
<dbReference type="Antibodypedia" id="82323">
    <property type="antibodies" value="1 antibodies from 1 providers"/>
</dbReference>
<dbReference type="DNASU" id="122183"/>
<dbReference type="Ensembl" id="ENST00000544357.2">
    <property type="protein sequence ID" value="ENSP00000438757.1"/>
    <property type="gene ID" value="ENSG00000229665.8"/>
</dbReference>
<dbReference type="Ensembl" id="ENST00000614894.4">
    <property type="protein sequence ID" value="ENSP00000480729.1"/>
    <property type="gene ID" value="ENSG00000229665.8"/>
</dbReference>
<dbReference type="GeneID" id="122183"/>
<dbReference type="GeneID" id="729233"/>
<dbReference type="GeneID" id="729240"/>
<dbReference type="GeneID" id="729246"/>
<dbReference type="GeneID" id="729250"/>
<dbReference type="KEGG" id="hsa:122183"/>
<dbReference type="KEGG" id="hsa:729233"/>
<dbReference type="KEGG" id="hsa:729240"/>
<dbReference type="KEGG" id="hsa:729246"/>
<dbReference type="KEGG" id="hsa:729250"/>
<dbReference type="MANE-Select" id="ENST00000544357.2">
    <property type="protein sequence ID" value="ENSP00000438757.1"/>
    <property type="RefSeq nucleotide sequence ID" value="NM_001130405.1"/>
    <property type="RefSeq protein sequence ID" value="NP_001123877.1"/>
</dbReference>
<dbReference type="AGR" id="HGNC:24754"/>
<dbReference type="AGR" id="HGNC:37220"/>
<dbReference type="AGR" id="HGNC:37221"/>
<dbReference type="AGR" id="HGNC:37222"/>
<dbReference type="AGR" id="HGNC:37223"/>
<dbReference type="CTD" id="122183"/>
<dbReference type="CTD" id="729233"/>
<dbReference type="CTD" id="729240"/>
<dbReference type="CTD" id="729246"/>
<dbReference type="CTD" id="729250"/>
<dbReference type="DisGeNET" id="122183"/>
<dbReference type="GeneCards" id="PRR20C"/>
<dbReference type="HGNC" id="HGNC:37221">
    <property type="gene designation" value="PRR20C"/>
</dbReference>
<dbReference type="HPA" id="ENSG00000229665">
    <property type="expression patterns" value="Not detected"/>
</dbReference>
<dbReference type="neXtProt" id="NX_P86479"/>
<dbReference type="OpenTargets" id="ENSG00000204919"/>
<dbReference type="PharmGKB" id="PA165505473"/>
<dbReference type="VEuPathDB" id="HostDB:ENSG00000229665"/>
<dbReference type="HOGENOM" id="CLU_117010_0_0_1"/>
<dbReference type="InParanoid" id="P86479"/>
<dbReference type="OMA" id="GCSIVDR"/>
<dbReference type="OrthoDB" id="9539181at2759"/>
<dbReference type="PAN-GO" id="P86479">
    <property type="GO annotations" value="0 GO annotations based on evolutionary models"/>
</dbReference>
<dbReference type="PhylomeDB" id="P86479"/>
<dbReference type="TreeFam" id="TF341860"/>
<dbReference type="PathwayCommons" id="P86479"/>
<dbReference type="SignaLink" id="P86479"/>
<dbReference type="BioGRID-ORCS" id="122183">
    <property type="hits" value="16 hits in 607 CRISPR screens"/>
</dbReference>
<dbReference type="BioGRID-ORCS" id="729233">
    <property type="hits" value="7 hits in 187 CRISPR screens"/>
</dbReference>
<dbReference type="BioGRID-ORCS" id="729240">
    <property type="hits" value="7 hits in 183 CRISPR screens"/>
</dbReference>
<dbReference type="BioGRID-ORCS" id="729246">
    <property type="hits" value="10 hits in 193 CRISPR screens"/>
</dbReference>
<dbReference type="BioGRID-ORCS" id="729250">
    <property type="hits" value="10 hits in 226 CRISPR screens"/>
</dbReference>
<dbReference type="Pharos" id="P86479">
    <property type="development level" value="Tdark"/>
</dbReference>
<dbReference type="PRO" id="PR:P86479"/>
<dbReference type="Proteomes" id="UP000005640">
    <property type="component" value="Chromosome 13"/>
</dbReference>
<dbReference type="RNAct" id="P86479">
    <property type="molecule type" value="protein"/>
</dbReference>
<dbReference type="Bgee" id="ENSG00000229665">
    <property type="expression patterns" value="Expressed in primordial germ cell in gonad and 2 other cell types or tissues"/>
</dbReference>
<dbReference type="InterPro" id="IPR031439">
    <property type="entry name" value="PRR20"/>
</dbReference>
<dbReference type="PANTHER" id="PTHR38819">
    <property type="entry name" value="PROLINE-RICH PROTEIN 20A-RELATED"/>
    <property type="match status" value="1"/>
</dbReference>
<dbReference type="PANTHER" id="PTHR38819:SF2">
    <property type="entry name" value="PROLINE-RICH PROTEIN 20A-RELATED"/>
    <property type="match status" value="1"/>
</dbReference>
<dbReference type="Pfam" id="PF15708">
    <property type="entry name" value="PRR20"/>
    <property type="match status" value="1"/>
</dbReference>
<gene>
    <name evidence="3" type="primary">PRR20C</name>
</gene>